<proteinExistence type="inferred from homology"/>
<gene>
    <name evidence="1" type="primary">rplU</name>
    <name evidence="1" type="synonym">rpl21</name>
    <name type="ordered locus">P9301_15301</name>
</gene>
<reference key="1">
    <citation type="journal article" date="2007" name="PLoS Genet.">
        <title>Patterns and implications of gene gain and loss in the evolution of Prochlorococcus.</title>
        <authorList>
            <person name="Kettler G.C."/>
            <person name="Martiny A.C."/>
            <person name="Huang K."/>
            <person name="Zucker J."/>
            <person name="Coleman M.L."/>
            <person name="Rodrigue S."/>
            <person name="Chen F."/>
            <person name="Lapidus A."/>
            <person name="Ferriera S."/>
            <person name="Johnson J."/>
            <person name="Steglich C."/>
            <person name="Church G.M."/>
            <person name="Richardson P."/>
            <person name="Chisholm S.W."/>
        </authorList>
    </citation>
    <scope>NUCLEOTIDE SEQUENCE [LARGE SCALE GENOMIC DNA]</scope>
    <source>
        <strain>MIT 9301</strain>
    </source>
</reference>
<name>RL21_PROM0</name>
<keyword id="KW-1185">Reference proteome</keyword>
<keyword id="KW-0687">Ribonucleoprotein</keyword>
<keyword id="KW-0689">Ribosomal protein</keyword>
<keyword id="KW-0694">RNA-binding</keyword>
<keyword id="KW-0699">rRNA-binding</keyword>
<dbReference type="EMBL" id="CP000576">
    <property type="protein sequence ID" value="ABO18153.1"/>
    <property type="molecule type" value="Genomic_DNA"/>
</dbReference>
<dbReference type="RefSeq" id="WP_011863457.1">
    <property type="nucleotide sequence ID" value="NC_009091.1"/>
</dbReference>
<dbReference type="SMR" id="A3PEH8"/>
<dbReference type="STRING" id="167546.P9301_15301"/>
<dbReference type="KEGG" id="pmg:P9301_15301"/>
<dbReference type="eggNOG" id="COG0261">
    <property type="taxonomic scope" value="Bacteria"/>
</dbReference>
<dbReference type="HOGENOM" id="CLU_061463_6_0_3"/>
<dbReference type="OrthoDB" id="9813334at2"/>
<dbReference type="Proteomes" id="UP000001430">
    <property type="component" value="Chromosome"/>
</dbReference>
<dbReference type="GO" id="GO:0005737">
    <property type="term" value="C:cytoplasm"/>
    <property type="evidence" value="ECO:0007669"/>
    <property type="project" value="UniProtKB-ARBA"/>
</dbReference>
<dbReference type="GO" id="GO:1990904">
    <property type="term" value="C:ribonucleoprotein complex"/>
    <property type="evidence" value="ECO:0007669"/>
    <property type="project" value="UniProtKB-KW"/>
</dbReference>
<dbReference type="GO" id="GO:0005840">
    <property type="term" value="C:ribosome"/>
    <property type="evidence" value="ECO:0007669"/>
    <property type="project" value="UniProtKB-KW"/>
</dbReference>
<dbReference type="GO" id="GO:0019843">
    <property type="term" value="F:rRNA binding"/>
    <property type="evidence" value="ECO:0007669"/>
    <property type="project" value="UniProtKB-UniRule"/>
</dbReference>
<dbReference type="GO" id="GO:0003735">
    <property type="term" value="F:structural constituent of ribosome"/>
    <property type="evidence" value="ECO:0007669"/>
    <property type="project" value="InterPro"/>
</dbReference>
<dbReference type="GO" id="GO:0006412">
    <property type="term" value="P:translation"/>
    <property type="evidence" value="ECO:0007669"/>
    <property type="project" value="UniProtKB-UniRule"/>
</dbReference>
<dbReference type="HAMAP" id="MF_01363">
    <property type="entry name" value="Ribosomal_bL21"/>
    <property type="match status" value="1"/>
</dbReference>
<dbReference type="InterPro" id="IPR028909">
    <property type="entry name" value="bL21-like"/>
</dbReference>
<dbReference type="InterPro" id="IPR036164">
    <property type="entry name" value="bL21-like_sf"/>
</dbReference>
<dbReference type="InterPro" id="IPR001787">
    <property type="entry name" value="Ribosomal_bL21"/>
</dbReference>
<dbReference type="InterPro" id="IPR018258">
    <property type="entry name" value="Ribosomal_bL21_CS"/>
</dbReference>
<dbReference type="NCBIfam" id="TIGR00061">
    <property type="entry name" value="L21"/>
    <property type="match status" value="1"/>
</dbReference>
<dbReference type="PANTHER" id="PTHR21349">
    <property type="entry name" value="50S RIBOSOMAL PROTEIN L21"/>
    <property type="match status" value="1"/>
</dbReference>
<dbReference type="PANTHER" id="PTHR21349:SF0">
    <property type="entry name" value="LARGE RIBOSOMAL SUBUNIT PROTEIN BL21M"/>
    <property type="match status" value="1"/>
</dbReference>
<dbReference type="Pfam" id="PF00829">
    <property type="entry name" value="Ribosomal_L21p"/>
    <property type="match status" value="1"/>
</dbReference>
<dbReference type="SUPFAM" id="SSF141091">
    <property type="entry name" value="L21p-like"/>
    <property type="match status" value="1"/>
</dbReference>
<dbReference type="PROSITE" id="PS01169">
    <property type="entry name" value="RIBOSOMAL_L21"/>
    <property type="match status" value="1"/>
</dbReference>
<comment type="function">
    <text evidence="1">This protein binds to 23S rRNA in the presence of protein L20.</text>
</comment>
<comment type="subunit">
    <text evidence="1">Part of the 50S ribosomal subunit. Contacts protein L20.</text>
</comment>
<comment type="similarity">
    <text evidence="1">Belongs to the bacterial ribosomal protein bL21 family.</text>
</comment>
<organism>
    <name type="scientific">Prochlorococcus marinus (strain MIT 9301)</name>
    <dbReference type="NCBI Taxonomy" id="167546"/>
    <lineage>
        <taxon>Bacteria</taxon>
        <taxon>Bacillati</taxon>
        <taxon>Cyanobacteriota</taxon>
        <taxon>Cyanophyceae</taxon>
        <taxon>Synechococcales</taxon>
        <taxon>Prochlorococcaceae</taxon>
        <taxon>Prochlorococcus</taxon>
    </lineage>
</organism>
<accession>A3PEH8</accession>
<protein>
    <recommendedName>
        <fullName evidence="1">Large ribosomal subunit protein bL21</fullName>
    </recommendedName>
    <alternativeName>
        <fullName evidence="3">50S ribosomal protein L21</fullName>
    </alternativeName>
</protein>
<evidence type="ECO:0000255" key="1">
    <source>
        <dbReference type="HAMAP-Rule" id="MF_01363"/>
    </source>
</evidence>
<evidence type="ECO:0000256" key="2">
    <source>
        <dbReference type="SAM" id="MobiDB-lite"/>
    </source>
</evidence>
<evidence type="ECO:0000305" key="3"/>
<sequence>MTNSKKSSNNSSKSSELYAIAETSGQQFWFEVDRYYDIDRLNAKEKDKITLEKVLLLKDKDSISVGKPYVKDAKIELEVVSHKRDKKILVYKMRPKKKTRRKMGHRQELTRVMVKSITIGKSAPKSSSKKETVKKETKPKSEKSTN</sequence>
<feature type="chain" id="PRO_1000067871" description="Large ribosomal subunit protein bL21">
    <location>
        <begin position="1"/>
        <end position="146"/>
    </location>
</feature>
<feature type="region of interest" description="Disordered" evidence="2">
    <location>
        <begin position="117"/>
        <end position="146"/>
    </location>
</feature>
<feature type="compositionally biased region" description="Basic and acidic residues" evidence="2">
    <location>
        <begin position="128"/>
        <end position="146"/>
    </location>
</feature>